<comment type="function">
    <text evidence="1">The RuvA-RuvB-RuvC complex processes Holliday junction (HJ) DNA during genetic recombination and DNA repair. Endonuclease that resolves HJ intermediates. Cleaves cruciform DNA by making single-stranded nicks across the HJ at symmetrical positions within the homologous arms, yielding a 5'-phosphate and a 3'-hydroxyl group; requires a central core of homology in the junction. The consensus cleavage sequence is 5'-(A/T)TT(C/G)-3'. Cleavage occurs on the 3'-side of the TT dinucleotide at the point of strand exchange. HJ branch migration catalyzed by RuvA-RuvB allows RuvC to scan DNA until it finds its consensus sequence, where it cleaves and resolves the cruciform DNA.</text>
</comment>
<comment type="catalytic activity">
    <reaction evidence="1">
        <text>Endonucleolytic cleavage at a junction such as a reciprocal single-stranded crossover between two homologous DNA duplexes (Holliday junction).</text>
        <dbReference type="EC" id="3.1.21.10"/>
    </reaction>
</comment>
<comment type="cofactor">
    <cofactor evidence="1">
        <name>Mg(2+)</name>
        <dbReference type="ChEBI" id="CHEBI:18420"/>
    </cofactor>
    <text evidence="1">Binds 2 Mg(2+) ion per subunit.</text>
</comment>
<comment type="subunit">
    <text evidence="1">Homodimer which binds Holliday junction (HJ) DNA. The HJ becomes 2-fold symmetrical on binding to RuvC with unstacked arms; it has a different conformation from HJ DNA in complex with RuvA. In the full resolvosome a probable DNA-RuvA(4)-RuvB(12)-RuvC(2) complex forms which resolves the HJ.</text>
</comment>
<comment type="subcellular location">
    <subcellularLocation>
        <location evidence="1">Cytoplasm</location>
    </subcellularLocation>
</comment>
<comment type="similarity">
    <text evidence="1">Belongs to the RuvC family.</text>
</comment>
<gene>
    <name evidence="1" type="primary">ruvC</name>
    <name type="ordered locus">GDI0799</name>
    <name type="ordered locus">Gdia_1218</name>
</gene>
<keyword id="KW-0963">Cytoplasm</keyword>
<keyword id="KW-0227">DNA damage</keyword>
<keyword id="KW-0233">DNA recombination</keyword>
<keyword id="KW-0234">DNA repair</keyword>
<keyword id="KW-0238">DNA-binding</keyword>
<keyword id="KW-0255">Endonuclease</keyword>
<keyword id="KW-0378">Hydrolase</keyword>
<keyword id="KW-0460">Magnesium</keyword>
<keyword id="KW-0479">Metal-binding</keyword>
<keyword id="KW-0540">Nuclease</keyword>
<keyword id="KW-1185">Reference proteome</keyword>
<feature type="chain" id="PRO_1000074489" description="Crossover junction endodeoxyribonuclease RuvC">
    <location>
        <begin position="1"/>
        <end position="168"/>
    </location>
</feature>
<feature type="active site" evidence="1">
    <location>
        <position position="8"/>
    </location>
</feature>
<feature type="active site" evidence="1">
    <location>
        <position position="68"/>
    </location>
</feature>
<feature type="active site" evidence="1">
    <location>
        <position position="140"/>
    </location>
</feature>
<feature type="binding site" evidence="1">
    <location>
        <position position="8"/>
    </location>
    <ligand>
        <name>Mg(2+)</name>
        <dbReference type="ChEBI" id="CHEBI:18420"/>
        <label>1</label>
    </ligand>
</feature>
<feature type="binding site" evidence="1">
    <location>
        <position position="68"/>
    </location>
    <ligand>
        <name>Mg(2+)</name>
        <dbReference type="ChEBI" id="CHEBI:18420"/>
        <label>2</label>
    </ligand>
</feature>
<feature type="binding site" evidence="1">
    <location>
        <position position="140"/>
    </location>
    <ligand>
        <name>Mg(2+)</name>
        <dbReference type="ChEBI" id="CHEBI:18420"/>
        <label>1</label>
    </ligand>
</feature>
<evidence type="ECO:0000255" key="1">
    <source>
        <dbReference type="HAMAP-Rule" id="MF_00034"/>
    </source>
</evidence>
<accession>A9HAV5</accession>
<accession>B5ZH34</accession>
<organism>
    <name type="scientific">Gluconacetobacter diazotrophicus (strain ATCC 49037 / DSM 5601 / CCUG 37298 / CIP 103539 / LMG 7603 / PAl5)</name>
    <dbReference type="NCBI Taxonomy" id="272568"/>
    <lineage>
        <taxon>Bacteria</taxon>
        <taxon>Pseudomonadati</taxon>
        <taxon>Pseudomonadota</taxon>
        <taxon>Alphaproteobacteria</taxon>
        <taxon>Acetobacterales</taxon>
        <taxon>Acetobacteraceae</taxon>
        <taxon>Gluconacetobacter</taxon>
    </lineage>
</organism>
<name>RUVC_GLUDA</name>
<protein>
    <recommendedName>
        <fullName evidence="1">Crossover junction endodeoxyribonuclease RuvC</fullName>
        <ecNumber evidence="1">3.1.21.10</ecNumber>
    </recommendedName>
    <alternativeName>
        <fullName evidence="1">Holliday junction nuclease RuvC</fullName>
    </alternativeName>
    <alternativeName>
        <fullName evidence="1">Holliday junction resolvase RuvC</fullName>
    </alternativeName>
</protein>
<dbReference type="EC" id="3.1.21.10" evidence="1"/>
<dbReference type="EMBL" id="AM889285">
    <property type="protein sequence ID" value="CAP54742.1"/>
    <property type="molecule type" value="Genomic_DNA"/>
</dbReference>
<dbReference type="EMBL" id="CP001189">
    <property type="protein sequence ID" value="ACI51001.1"/>
    <property type="molecule type" value="Genomic_DNA"/>
</dbReference>
<dbReference type="RefSeq" id="WP_012223549.1">
    <property type="nucleotide sequence ID" value="NC_010125.1"/>
</dbReference>
<dbReference type="SMR" id="A9HAV5"/>
<dbReference type="STRING" id="272568.GDI0799"/>
<dbReference type="KEGG" id="gdi:GDI0799"/>
<dbReference type="KEGG" id="gdj:Gdia_1218"/>
<dbReference type="eggNOG" id="COG0817">
    <property type="taxonomic scope" value="Bacteria"/>
</dbReference>
<dbReference type="HOGENOM" id="CLU_091257_1_0_5"/>
<dbReference type="OrthoDB" id="9805499at2"/>
<dbReference type="Proteomes" id="UP000001176">
    <property type="component" value="Chromosome"/>
</dbReference>
<dbReference type="GO" id="GO:0005737">
    <property type="term" value="C:cytoplasm"/>
    <property type="evidence" value="ECO:0007669"/>
    <property type="project" value="UniProtKB-SubCell"/>
</dbReference>
<dbReference type="GO" id="GO:0048476">
    <property type="term" value="C:Holliday junction resolvase complex"/>
    <property type="evidence" value="ECO:0007669"/>
    <property type="project" value="UniProtKB-UniRule"/>
</dbReference>
<dbReference type="GO" id="GO:0008821">
    <property type="term" value="F:crossover junction DNA endonuclease activity"/>
    <property type="evidence" value="ECO:0007669"/>
    <property type="project" value="UniProtKB-UniRule"/>
</dbReference>
<dbReference type="GO" id="GO:0003677">
    <property type="term" value="F:DNA binding"/>
    <property type="evidence" value="ECO:0007669"/>
    <property type="project" value="UniProtKB-KW"/>
</dbReference>
<dbReference type="GO" id="GO:0000287">
    <property type="term" value="F:magnesium ion binding"/>
    <property type="evidence" value="ECO:0007669"/>
    <property type="project" value="UniProtKB-UniRule"/>
</dbReference>
<dbReference type="GO" id="GO:0006310">
    <property type="term" value="P:DNA recombination"/>
    <property type="evidence" value="ECO:0007669"/>
    <property type="project" value="UniProtKB-UniRule"/>
</dbReference>
<dbReference type="GO" id="GO:0006281">
    <property type="term" value="P:DNA repair"/>
    <property type="evidence" value="ECO:0007669"/>
    <property type="project" value="UniProtKB-UniRule"/>
</dbReference>
<dbReference type="CDD" id="cd16962">
    <property type="entry name" value="RuvC"/>
    <property type="match status" value="1"/>
</dbReference>
<dbReference type="FunFam" id="3.30.420.10:FF:000002">
    <property type="entry name" value="Crossover junction endodeoxyribonuclease RuvC"/>
    <property type="match status" value="1"/>
</dbReference>
<dbReference type="Gene3D" id="3.30.420.10">
    <property type="entry name" value="Ribonuclease H-like superfamily/Ribonuclease H"/>
    <property type="match status" value="1"/>
</dbReference>
<dbReference type="HAMAP" id="MF_00034">
    <property type="entry name" value="RuvC"/>
    <property type="match status" value="1"/>
</dbReference>
<dbReference type="InterPro" id="IPR012337">
    <property type="entry name" value="RNaseH-like_sf"/>
</dbReference>
<dbReference type="InterPro" id="IPR036397">
    <property type="entry name" value="RNaseH_sf"/>
</dbReference>
<dbReference type="InterPro" id="IPR020563">
    <property type="entry name" value="X-over_junc_endoDNase_Mg_BS"/>
</dbReference>
<dbReference type="InterPro" id="IPR002176">
    <property type="entry name" value="X-over_junc_endoDNase_RuvC"/>
</dbReference>
<dbReference type="NCBIfam" id="TIGR00228">
    <property type="entry name" value="ruvC"/>
    <property type="match status" value="1"/>
</dbReference>
<dbReference type="PANTHER" id="PTHR30194">
    <property type="entry name" value="CROSSOVER JUNCTION ENDODEOXYRIBONUCLEASE RUVC"/>
    <property type="match status" value="1"/>
</dbReference>
<dbReference type="PANTHER" id="PTHR30194:SF3">
    <property type="entry name" value="CROSSOVER JUNCTION ENDODEOXYRIBONUCLEASE RUVC"/>
    <property type="match status" value="1"/>
</dbReference>
<dbReference type="Pfam" id="PF02075">
    <property type="entry name" value="RuvC"/>
    <property type="match status" value="1"/>
</dbReference>
<dbReference type="PRINTS" id="PR00696">
    <property type="entry name" value="RSOLVASERUVC"/>
</dbReference>
<dbReference type="SUPFAM" id="SSF53098">
    <property type="entry name" value="Ribonuclease H-like"/>
    <property type="match status" value="1"/>
</dbReference>
<dbReference type="PROSITE" id="PS01321">
    <property type="entry name" value="RUVC"/>
    <property type="match status" value="1"/>
</dbReference>
<proteinExistence type="inferred from homology"/>
<reference key="1">
    <citation type="journal article" date="2009" name="BMC Genomics">
        <title>Complete genome sequence of the sugarcane nitrogen-fixing endophyte Gluconacetobacter diazotrophicus Pal5.</title>
        <authorList>
            <person name="Bertalan M."/>
            <person name="Albano R."/>
            <person name="de Padua V."/>
            <person name="Rouws L."/>
            <person name="Rojas C."/>
            <person name="Hemerly A."/>
            <person name="Teixeira K."/>
            <person name="Schwab S."/>
            <person name="Araujo J."/>
            <person name="Oliveira A."/>
            <person name="Franca L."/>
            <person name="Magalhaes V."/>
            <person name="Alqueres S."/>
            <person name="Cardoso A."/>
            <person name="Almeida W."/>
            <person name="Loureiro M.M."/>
            <person name="Nogueira E."/>
            <person name="Cidade D."/>
            <person name="Oliveira D."/>
            <person name="Simao T."/>
            <person name="Macedo J."/>
            <person name="Valadao A."/>
            <person name="Dreschsel M."/>
            <person name="Freitas F."/>
            <person name="Vidal M."/>
            <person name="Guedes H."/>
            <person name="Rodrigues E."/>
            <person name="Meneses C."/>
            <person name="Brioso P."/>
            <person name="Pozzer L."/>
            <person name="Figueiredo D."/>
            <person name="Montano H."/>
            <person name="Junior J."/>
            <person name="de Souza Filho G."/>
            <person name="Martin Quintana Flores V."/>
            <person name="Ferreira B."/>
            <person name="Branco A."/>
            <person name="Gonzalez P."/>
            <person name="Guillobel H."/>
            <person name="Lemos M."/>
            <person name="Seibel L."/>
            <person name="Macedo J."/>
            <person name="Alves-Ferreira M."/>
            <person name="Sachetto-Martins G."/>
            <person name="Coelho A."/>
            <person name="Santos E."/>
            <person name="Amaral G."/>
            <person name="Neves A."/>
            <person name="Pacheco A.B."/>
            <person name="Carvalho D."/>
            <person name="Lery L."/>
            <person name="Bisch P."/>
            <person name="Rossle S.C."/>
            <person name="Urmenyi T."/>
            <person name="Rael Pereira A."/>
            <person name="Silva R."/>
            <person name="Rondinelli E."/>
            <person name="von Kruger W."/>
            <person name="Martins O."/>
            <person name="Baldani J.I."/>
            <person name="Ferreira P.C."/>
        </authorList>
    </citation>
    <scope>NUCLEOTIDE SEQUENCE [LARGE SCALE GENOMIC DNA]</scope>
    <source>
        <strain>ATCC 49037 / DSM 5601 / CCUG 37298 / CIP 103539 / LMG 7603 / PAl5</strain>
    </source>
</reference>
<reference key="2">
    <citation type="journal article" date="2010" name="Stand. Genomic Sci.">
        <title>Two genome sequences of the same bacterial strain, Gluconacetobacter diazotrophicus PAl 5, suggest a new standard in genome sequence submission.</title>
        <authorList>
            <person name="Giongo A."/>
            <person name="Tyler H.L."/>
            <person name="Zipperer U.N."/>
            <person name="Triplett E.W."/>
        </authorList>
    </citation>
    <scope>NUCLEOTIDE SEQUENCE [LARGE SCALE GENOMIC DNA]</scope>
    <source>
        <strain>ATCC 49037 / DSM 5601 / CCUG 37298 / CIP 103539 / LMG 7603 / PAl5</strain>
    </source>
</reference>
<sequence>MVRLLGIDPGLRFTGWGLVDVDGNRLCHVADGVIATDGDAPVPERLRCLHDSLLDLVRRYGPREAAVEETYVNRNGASTLKLGYARGVALLVPALAGIAVSEYGAMAVKRAVVGTGAASKDQVEMMVRRLLPGATIRRADASDALAVAICHAHHRASALRVSAGTRMA</sequence>